<dbReference type="EC" id="2.1.1.45" evidence="1"/>
<dbReference type="EMBL" id="AE016822">
    <property type="protein sequence ID" value="AAT88865.1"/>
    <property type="molecule type" value="Genomic_DNA"/>
</dbReference>
<dbReference type="RefSeq" id="WP_011185862.1">
    <property type="nucleotide sequence ID" value="NC_006087.1"/>
</dbReference>
<dbReference type="SMR" id="Q6AFI0"/>
<dbReference type="STRING" id="281090.Lxx09930"/>
<dbReference type="KEGG" id="lxx:Lxx09930"/>
<dbReference type="eggNOG" id="COG0207">
    <property type="taxonomic scope" value="Bacteria"/>
</dbReference>
<dbReference type="HOGENOM" id="CLU_021669_0_0_11"/>
<dbReference type="UniPathway" id="UPA00575"/>
<dbReference type="Proteomes" id="UP000001306">
    <property type="component" value="Chromosome"/>
</dbReference>
<dbReference type="GO" id="GO:0005829">
    <property type="term" value="C:cytosol"/>
    <property type="evidence" value="ECO:0007669"/>
    <property type="project" value="TreeGrafter"/>
</dbReference>
<dbReference type="GO" id="GO:0004799">
    <property type="term" value="F:thymidylate synthase activity"/>
    <property type="evidence" value="ECO:0007669"/>
    <property type="project" value="UniProtKB-UniRule"/>
</dbReference>
<dbReference type="GO" id="GO:0006231">
    <property type="term" value="P:dTMP biosynthetic process"/>
    <property type="evidence" value="ECO:0007669"/>
    <property type="project" value="UniProtKB-UniRule"/>
</dbReference>
<dbReference type="GO" id="GO:0006235">
    <property type="term" value="P:dTTP biosynthetic process"/>
    <property type="evidence" value="ECO:0007669"/>
    <property type="project" value="UniProtKB-UniRule"/>
</dbReference>
<dbReference type="GO" id="GO:0032259">
    <property type="term" value="P:methylation"/>
    <property type="evidence" value="ECO:0007669"/>
    <property type="project" value="UniProtKB-KW"/>
</dbReference>
<dbReference type="CDD" id="cd00351">
    <property type="entry name" value="TS_Pyrimidine_HMase"/>
    <property type="match status" value="1"/>
</dbReference>
<dbReference type="FunFam" id="3.30.572.10:FF:000001">
    <property type="entry name" value="Thymidylate synthase"/>
    <property type="match status" value="1"/>
</dbReference>
<dbReference type="Gene3D" id="3.30.572.10">
    <property type="entry name" value="Thymidylate synthase/dCMP hydroxymethylase domain"/>
    <property type="match status" value="1"/>
</dbReference>
<dbReference type="HAMAP" id="MF_00008">
    <property type="entry name" value="Thymidy_synth_bact"/>
    <property type="match status" value="1"/>
</dbReference>
<dbReference type="InterPro" id="IPR045097">
    <property type="entry name" value="Thymidate_synth/dCMP_Mease"/>
</dbReference>
<dbReference type="InterPro" id="IPR023451">
    <property type="entry name" value="Thymidate_synth/dCMP_Mease_dom"/>
</dbReference>
<dbReference type="InterPro" id="IPR036926">
    <property type="entry name" value="Thymidate_synth/dCMP_Mease_sf"/>
</dbReference>
<dbReference type="InterPro" id="IPR000398">
    <property type="entry name" value="Thymidylate_synthase"/>
</dbReference>
<dbReference type="InterPro" id="IPR020940">
    <property type="entry name" value="Thymidylate_synthase_AS"/>
</dbReference>
<dbReference type="NCBIfam" id="NF002497">
    <property type="entry name" value="PRK01827.1-3"/>
    <property type="match status" value="1"/>
</dbReference>
<dbReference type="NCBIfam" id="NF002499">
    <property type="entry name" value="PRK01827.1-5"/>
    <property type="match status" value="1"/>
</dbReference>
<dbReference type="NCBIfam" id="TIGR03284">
    <property type="entry name" value="thym_sym"/>
    <property type="match status" value="2"/>
</dbReference>
<dbReference type="PANTHER" id="PTHR11548:SF9">
    <property type="entry name" value="THYMIDYLATE SYNTHASE"/>
    <property type="match status" value="1"/>
</dbReference>
<dbReference type="PANTHER" id="PTHR11548">
    <property type="entry name" value="THYMIDYLATE SYNTHASE 1"/>
    <property type="match status" value="1"/>
</dbReference>
<dbReference type="Pfam" id="PF00303">
    <property type="entry name" value="Thymidylat_synt"/>
    <property type="match status" value="1"/>
</dbReference>
<dbReference type="PRINTS" id="PR00108">
    <property type="entry name" value="THYMDSNTHASE"/>
</dbReference>
<dbReference type="SUPFAM" id="SSF55831">
    <property type="entry name" value="Thymidylate synthase/dCMP hydroxymethylase"/>
    <property type="match status" value="1"/>
</dbReference>
<dbReference type="PROSITE" id="PS00091">
    <property type="entry name" value="THYMIDYLATE_SYNTHASE"/>
    <property type="match status" value="1"/>
</dbReference>
<proteinExistence type="inferred from homology"/>
<organism>
    <name type="scientific">Leifsonia xyli subsp. xyli (strain CTCB07)</name>
    <dbReference type="NCBI Taxonomy" id="281090"/>
    <lineage>
        <taxon>Bacteria</taxon>
        <taxon>Bacillati</taxon>
        <taxon>Actinomycetota</taxon>
        <taxon>Actinomycetes</taxon>
        <taxon>Micrococcales</taxon>
        <taxon>Microbacteriaceae</taxon>
        <taxon>Leifsonia</taxon>
    </lineage>
</organism>
<feature type="chain" id="PRO_0000140974" description="Thymidylate synthase">
    <location>
        <begin position="1"/>
        <end position="269"/>
    </location>
</feature>
<feature type="active site" description="Nucleophile" evidence="1">
    <location>
        <position position="151"/>
    </location>
</feature>
<feature type="binding site" description="in other chain" evidence="1">
    <location>
        <position position="26"/>
    </location>
    <ligand>
        <name>dUMP</name>
        <dbReference type="ChEBI" id="CHEBI:246422"/>
        <note>ligand shared between dimeric partners</note>
    </ligand>
</feature>
<feature type="binding site" evidence="1">
    <location>
        <position position="56"/>
    </location>
    <ligand>
        <name>(6R)-5,10-methylene-5,6,7,8-tetrahydrofolate</name>
        <dbReference type="ChEBI" id="CHEBI:15636"/>
    </ligand>
</feature>
<feature type="binding site" evidence="1">
    <location>
        <begin position="131"/>
        <end position="132"/>
    </location>
    <ligand>
        <name>dUMP</name>
        <dbReference type="ChEBI" id="CHEBI:246422"/>
        <note>ligand shared between dimeric partners</note>
    </ligand>
</feature>
<feature type="binding site" description="in other chain" evidence="1">
    <location>
        <begin position="171"/>
        <end position="174"/>
    </location>
    <ligand>
        <name>dUMP</name>
        <dbReference type="ChEBI" id="CHEBI:246422"/>
        <note>ligand shared between dimeric partners</note>
    </ligand>
</feature>
<feature type="binding site" evidence="1">
    <location>
        <position position="174"/>
    </location>
    <ligand>
        <name>(6R)-5,10-methylene-5,6,7,8-tetrahydrofolate</name>
        <dbReference type="ChEBI" id="CHEBI:15636"/>
    </ligand>
</feature>
<feature type="binding site" description="in other chain" evidence="1">
    <location>
        <position position="182"/>
    </location>
    <ligand>
        <name>dUMP</name>
        <dbReference type="ChEBI" id="CHEBI:246422"/>
        <note>ligand shared between dimeric partners</note>
    </ligand>
</feature>
<feature type="binding site" description="in other chain" evidence="1">
    <location>
        <begin position="212"/>
        <end position="214"/>
    </location>
    <ligand>
        <name>dUMP</name>
        <dbReference type="ChEBI" id="CHEBI:246422"/>
        <note>ligand shared between dimeric partners</note>
    </ligand>
</feature>
<feature type="binding site" evidence="1">
    <location>
        <position position="268"/>
    </location>
    <ligand>
        <name>(6R)-5,10-methylene-5,6,7,8-tetrahydrofolate</name>
        <dbReference type="ChEBI" id="CHEBI:15636"/>
    </ligand>
</feature>
<accession>Q6AFI0</accession>
<protein>
    <recommendedName>
        <fullName evidence="1">Thymidylate synthase</fullName>
        <shortName evidence="1">TS</shortName>
        <shortName evidence="1">TSase</shortName>
        <ecNumber evidence="1">2.1.1.45</ecNumber>
    </recommendedName>
</protein>
<gene>
    <name evidence="1" type="primary">thyA</name>
    <name type="ordered locus">Lxx09930</name>
</gene>
<keyword id="KW-0963">Cytoplasm</keyword>
<keyword id="KW-0489">Methyltransferase</keyword>
<keyword id="KW-0545">Nucleotide biosynthesis</keyword>
<keyword id="KW-1185">Reference proteome</keyword>
<keyword id="KW-0808">Transferase</keyword>
<name>TYSY_LEIXX</name>
<sequence length="269" mass="30672">MTTPIPTPYEDLLRDVLANGSHKSDRTGTGTRSVFGRQLRFDLADGFPLITTKRVHFKSIAYELLWFLRGDSNVGWLRENGVSIWDEWADERGELGPVYGVQWRSWPSPDGTHIDQIQQVVDTLRRDPDSRRIIVSAWNVADIPDMALAPCHAFFQFYVADGKLSCQLYQRSADMFLGVPFNIASYALLTLMVAQQVGLEPGEFVWTGGDVHIYDNHIEQVNEQLSRNPFPAPALRFARRPESVFDYRYEDFVLEGYRHHPAIRAAVAV</sequence>
<evidence type="ECO:0000255" key="1">
    <source>
        <dbReference type="HAMAP-Rule" id="MF_00008"/>
    </source>
</evidence>
<reference key="1">
    <citation type="journal article" date="2004" name="Mol. Plant Microbe Interact.">
        <title>The genome sequence of the Gram-positive sugarcane pathogen Leifsonia xyli subsp. xyli.</title>
        <authorList>
            <person name="Monteiro-Vitorello C.B."/>
            <person name="Camargo L.E.A."/>
            <person name="Van Sluys M.A."/>
            <person name="Kitajima J.P."/>
            <person name="Truffi D."/>
            <person name="do Amaral A.M."/>
            <person name="Harakava R."/>
            <person name="de Oliveira J.C.F."/>
            <person name="Wood D."/>
            <person name="de Oliveira M.C."/>
            <person name="Miyaki C.Y."/>
            <person name="Takita M.A."/>
            <person name="da Silva A.C.R."/>
            <person name="Furlan L.R."/>
            <person name="Carraro D.M."/>
            <person name="Camarotte G."/>
            <person name="Almeida N.F. Jr."/>
            <person name="Carrer H."/>
            <person name="Coutinho L.L."/>
            <person name="El-Dorry H.A."/>
            <person name="Ferro M.I.T."/>
            <person name="Gagliardi P.R."/>
            <person name="Giglioti E."/>
            <person name="Goldman M.H.S."/>
            <person name="Goldman G.H."/>
            <person name="Kimura E.T."/>
            <person name="Ferro E.S."/>
            <person name="Kuramae E.E."/>
            <person name="Lemos E.G.M."/>
            <person name="Lemos M.V.F."/>
            <person name="Mauro S.M.Z."/>
            <person name="Machado M.A."/>
            <person name="Marino C.L."/>
            <person name="Menck C.F."/>
            <person name="Nunes L.R."/>
            <person name="Oliveira R.C."/>
            <person name="Pereira G.G."/>
            <person name="Siqueira W."/>
            <person name="de Souza A.A."/>
            <person name="Tsai S.M."/>
            <person name="Zanca A.S."/>
            <person name="Simpson A.J.G."/>
            <person name="Brumbley S.M."/>
            <person name="Setubal J.C."/>
        </authorList>
    </citation>
    <scope>NUCLEOTIDE SEQUENCE [LARGE SCALE GENOMIC DNA]</scope>
    <source>
        <strain>CTCB07</strain>
    </source>
</reference>
<comment type="function">
    <text evidence="1">Catalyzes the reductive methylation of 2'-deoxyuridine-5'-monophosphate (dUMP) to 2'-deoxythymidine-5'-monophosphate (dTMP) while utilizing 5,10-methylenetetrahydrofolate (mTHF) as the methyl donor and reductant in the reaction, yielding dihydrofolate (DHF) as a by-product. This enzymatic reaction provides an intracellular de novo source of dTMP, an essential precursor for DNA biosynthesis.</text>
</comment>
<comment type="catalytic activity">
    <reaction evidence="1">
        <text>dUMP + (6R)-5,10-methylene-5,6,7,8-tetrahydrofolate = 7,8-dihydrofolate + dTMP</text>
        <dbReference type="Rhea" id="RHEA:12104"/>
        <dbReference type="ChEBI" id="CHEBI:15636"/>
        <dbReference type="ChEBI" id="CHEBI:57451"/>
        <dbReference type="ChEBI" id="CHEBI:63528"/>
        <dbReference type="ChEBI" id="CHEBI:246422"/>
        <dbReference type="EC" id="2.1.1.45"/>
    </reaction>
</comment>
<comment type="pathway">
    <text evidence="1">Pyrimidine metabolism; dTTP biosynthesis.</text>
</comment>
<comment type="subunit">
    <text evidence="1">Homodimer.</text>
</comment>
<comment type="subcellular location">
    <subcellularLocation>
        <location evidence="1">Cytoplasm</location>
    </subcellularLocation>
</comment>
<comment type="similarity">
    <text evidence="1">Belongs to the thymidylate synthase family. Bacterial-type ThyA subfamily.</text>
</comment>